<protein>
    <recommendedName>
        <fullName evidence="1">Chaperonin GroEL 1</fullName>
        <ecNumber evidence="1">5.6.1.7</ecNumber>
    </recommendedName>
    <alternativeName>
        <fullName evidence="1">60 kDa chaperonin 1</fullName>
    </alternativeName>
    <alternativeName>
        <fullName evidence="1">Chaperonin-60 1</fullName>
        <shortName evidence="1">Cpn60 1</shortName>
    </alternativeName>
    <alternativeName>
        <fullName>HSP58</fullName>
    </alternativeName>
</protein>
<evidence type="ECO:0000255" key="1">
    <source>
        <dbReference type="HAMAP-Rule" id="MF_00600"/>
    </source>
</evidence>
<evidence type="ECO:0000269" key="2">
    <source>
    </source>
</evidence>
<feature type="initiator methionine" description="Removed" evidence="2">
    <location>
        <position position="1"/>
    </location>
</feature>
<feature type="chain" id="PRO_0000063544" description="Chaperonin GroEL 1">
    <location>
        <begin position="2"/>
        <end position="540"/>
    </location>
</feature>
<feature type="binding site" evidence="1">
    <location>
        <begin position="29"/>
        <end position="32"/>
    </location>
    <ligand>
        <name>ATP</name>
        <dbReference type="ChEBI" id="CHEBI:30616"/>
    </ligand>
</feature>
<feature type="binding site" evidence="1">
    <location>
        <begin position="86"/>
        <end position="90"/>
    </location>
    <ligand>
        <name>ATP</name>
        <dbReference type="ChEBI" id="CHEBI:30616"/>
    </ligand>
</feature>
<feature type="binding site" evidence="1">
    <location>
        <position position="415"/>
    </location>
    <ligand>
        <name>ATP</name>
        <dbReference type="ChEBI" id="CHEBI:30616"/>
    </ligand>
</feature>
<feature type="binding site" evidence="1">
    <location>
        <begin position="479"/>
        <end position="481"/>
    </location>
    <ligand>
        <name>ATP</name>
        <dbReference type="ChEBI" id="CHEBI:30616"/>
    </ligand>
</feature>
<feature type="binding site" evidence="1">
    <location>
        <position position="495"/>
    </location>
    <ligand>
        <name>ATP</name>
        <dbReference type="ChEBI" id="CHEBI:30616"/>
    </ligand>
</feature>
<organism>
    <name type="scientific">Streptomyces albus G</name>
    <dbReference type="NCBI Taxonomy" id="1962"/>
    <lineage>
        <taxon>Bacteria</taxon>
        <taxon>Bacillati</taxon>
        <taxon>Actinomycetota</taxon>
        <taxon>Actinomycetes</taxon>
        <taxon>Kitasatosporales</taxon>
        <taxon>Streptomycetaceae</taxon>
        <taxon>Streptomyces</taxon>
    </lineage>
</organism>
<keyword id="KW-0067">ATP-binding</keyword>
<keyword id="KW-0143">Chaperone</keyword>
<keyword id="KW-0963">Cytoplasm</keyword>
<keyword id="KW-0903">Direct protein sequencing</keyword>
<keyword id="KW-0413">Isomerase</keyword>
<keyword id="KW-0547">Nucleotide-binding</keyword>
<dbReference type="EC" id="5.6.1.7" evidence="1"/>
<dbReference type="EMBL" id="M76657">
    <property type="protein sequence ID" value="AAA26753.1"/>
    <property type="molecule type" value="Genomic_DNA"/>
</dbReference>
<dbReference type="PIR" id="B41325">
    <property type="entry name" value="B41325"/>
</dbReference>
<dbReference type="SMR" id="Q00767"/>
<dbReference type="GO" id="GO:0005737">
    <property type="term" value="C:cytoplasm"/>
    <property type="evidence" value="ECO:0007669"/>
    <property type="project" value="UniProtKB-SubCell"/>
</dbReference>
<dbReference type="GO" id="GO:0005524">
    <property type="term" value="F:ATP binding"/>
    <property type="evidence" value="ECO:0007669"/>
    <property type="project" value="UniProtKB-UniRule"/>
</dbReference>
<dbReference type="GO" id="GO:0140662">
    <property type="term" value="F:ATP-dependent protein folding chaperone"/>
    <property type="evidence" value="ECO:0007669"/>
    <property type="project" value="InterPro"/>
</dbReference>
<dbReference type="GO" id="GO:0016853">
    <property type="term" value="F:isomerase activity"/>
    <property type="evidence" value="ECO:0007669"/>
    <property type="project" value="UniProtKB-KW"/>
</dbReference>
<dbReference type="GO" id="GO:0051082">
    <property type="term" value="F:unfolded protein binding"/>
    <property type="evidence" value="ECO:0007669"/>
    <property type="project" value="UniProtKB-UniRule"/>
</dbReference>
<dbReference type="GO" id="GO:0042026">
    <property type="term" value="P:protein refolding"/>
    <property type="evidence" value="ECO:0007669"/>
    <property type="project" value="UniProtKB-UniRule"/>
</dbReference>
<dbReference type="CDD" id="cd03344">
    <property type="entry name" value="GroEL"/>
    <property type="match status" value="1"/>
</dbReference>
<dbReference type="FunFam" id="3.50.7.10:FF:000001">
    <property type="entry name" value="60 kDa chaperonin"/>
    <property type="match status" value="1"/>
</dbReference>
<dbReference type="Gene3D" id="3.50.7.10">
    <property type="entry name" value="GroEL"/>
    <property type="match status" value="1"/>
</dbReference>
<dbReference type="Gene3D" id="1.10.560.10">
    <property type="entry name" value="GroEL-like equatorial domain"/>
    <property type="match status" value="1"/>
</dbReference>
<dbReference type="Gene3D" id="3.30.260.10">
    <property type="entry name" value="TCP-1-like chaperonin intermediate domain"/>
    <property type="match status" value="1"/>
</dbReference>
<dbReference type="HAMAP" id="MF_00600">
    <property type="entry name" value="CH60"/>
    <property type="match status" value="1"/>
</dbReference>
<dbReference type="InterPro" id="IPR018370">
    <property type="entry name" value="Chaperonin_Cpn60_CS"/>
</dbReference>
<dbReference type="InterPro" id="IPR001844">
    <property type="entry name" value="Cpn60/GroEL"/>
</dbReference>
<dbReference type="InterPro" id="IPR002423">
    <property type="entry name" value="Cpn60/GroEL/TCP-1"/>
</dbReference>
<dbReference type="InterPro" id="IPR027409">
    <property type="entry name" value="GroEL-like_apical_dom_sf"/>
</dbReference>
<dbReference type="InterPro" id="IPR027413">
    <property type="entry name" value="GROEL-like_equatorial_sf"/>
</dbReference>
<dbReference type="InterPro" id="IPR027410">
    <property type="entry name" value="TCP-1-like_intermed_sf"/>
</dbReference>
<dbReference type="NCBIfam" id="TIGR02348">
    <property type="entry name" value="GroEL"/>
    <property type="match status" value="1"/>
</dbReference>
<dbReference type="NCBIfam" id="NF000592">
    <property type="entry name" value="PRK00013.1"/>
    <property type="match status" value="1"/>
</dbReference>
<dbReference type="NCBIfam" id="NF009487">
    <property type="entry name" value="PRK12849.1"/>
    <property type="match status" value="1"/>
</dbReference>
<dbReference type="NCBIfam" id="NF009488">
    <property type="entry name" value="PRK12850.1"/>
    <property type="match status" value="1"/>
</dbReference>
<dbReference type="NCBIfam" id="NF009489">
    <property type="entry name" value="PRK12851.1"/>
    <property type="match status" value="1"/>
</dbReference>
<dbReference type="PANTHER" id="PTHR45633">
    <property type="entry name" value="60 KDA HEAT SHOCK PROTEIN, MITOCHONDRIAL"/>
    <property type="match status" value="1"/>
</dbReference>
<dbReference type="Pfam" id="PF00118">
    <property type="entry name" value="Cpn60_TCP1"/>
    <property type="match status" value="1"/>
</dbReference>
<dbReference type="PRINTS" id="PR00298">
    <property type="entry name" value="CHAPERONIN60"/>
</dbReference>
<dbReference type="SUPFAM" id="SSF52029">
    <property type="entry name" value="GroEL apical domain-like"/>
    <property type="match status" value="1"/>
</dbReference>
<dbReference type="SUPFAM" id="SSF48592">
    <property type="entry name" value="GroEL equatorial domain-like"/>
    <property type="match status" value="1"/>
</dbReference>
<dbReference type="SUPFAM" id="SSF54849">
    <property type="entry name" value="GroEL-intermediate domain like"/>
    <property type="match status" value="1"/>
</dbReference>
<dbReference type="PROSITE" id="PS00296">
    <property type="entry name" value="CHAPERONINS_CPN60"/>
    <property type="match status" value="1"/>
</dbReference>
<proteinExistence type="evidence at protein level"/>
<comment type="function">
    <text evidence="1">Together with its co-chaperonin GroES, plays an essential role in assisting protein folding. The GroEL-GroES system forms a nano-cage that allows encapsulation of the non-native substrate proteins and provides a physical environment optimized to promote and accelerate protein folding.</text>
</comment>
<comment type="catalytic activity">
    <reaction evidence="1">
        <text>ATP + H2O + a folded polypeptide = ADP + phosphate + an unfolded polypeptide.</text>
        <dbReference type="EC" id="5.6.1.7"/>
    </reaction>
</comment>
<comment type="subunit">
    <text evidence="1">Forms a cylinder of 14 subunits composed of two heptameric rings stacked back-to-back. Interacts with the co-chaperonin GroES.</text>
</comment>
<comment type="subcellular location">
    <subcellularLocation>
        <location evidence="1">Cytoplasm</location>
    </subcellularLocation>
</comment>
<comment type="similarity">
    <text evidence="1">Belongs to the chaperonin (HSP60) family.</text>
</comment>
<reference key="1">
    <citation type="journal article" date="1991" name="J. Bacteriol.">
        <title>Characterization of the groEL-like genes in Streptomyces albus.</title>
        <authorList>
            <person name="Mazodier P."/>
            <person name="Guglielmi G."/>
            <person name="Davies J."/>
            <person name="Thompson C.J."/>
        </authorList>
    </citation>
    <scope>NUCLEOTIDE SEQUENCE [GENOMIC DNA]</scope>
</reference>
<reference key="2">
    <citation type="journal article" date="1991" name="J. Bacteriol.">
        <title>A survey of the heat shock response in four Streptomyces species reveals two groEL-like genes and three groEL-like proteins in Streptomyces albus.</title>
        <authorList>
            <person name="Guglielmi G."/>
            <person name="Mazodier P."/>
            <person name="Thompson C.J."/>
            <person name="Davies J."/>
        </authorList>
    </citation>
    <scope>PROTEIN SEQUENCE OF 2-18 AND 59-93</scope>
</reference>
<sequence>MAKILKFDEDARRALERGVNQLADTVKVTIGPKGRNVVIDKKFGAPTITNDGVTIAREVECDDPYENLGAQLVKEVATKTNDIAGDGTTTATVLAQALVREGLRNVAAGASPAALKKGIDAAVAAVSAELLDTARPIDDKSDIAAVAALSAQDKQVGELIAEAMDKVGKDGVITVEESNTFGVDLDFTEGMAFDKGYLSPYMVTDQERMEAVLDDPYILIHQGKIGSIQDLLPLLEKVIQAGGSKPLLIIAEDVEGEALSTLVVNKIRGTFNAVAVKAPGFGDRRKAMLGDMATLTGATVIAEEVGLKLDQAGLDVLGTARRVTVTKDDTTIVDGGGNAEDVQGRVAQIKAEIESTDSDWDREKLQERLAKLAGGVCVIRVGAATEVELKERKHRLEDAISATRAAVEEGIVSGGGSALVHAVKVLDDNLGRTGDEATGVAVVRRAAVEPLRWIAENAGLEGYVITTKVAELDKGQGFNAATGEYGDLVKAGVIDPVKVTRSALENAASIASLLLTTETLVVEKPAEEEPEAGHGHGHSH</sequence>
<gene>
    <name evidence="1" type="primary">groEL1</name>
    <name evidence="1" type="synonym">groL1</name>
</gene>
<accession>Q00767</accession>
<name>CH601_STRAL</name>